<organism>
    <name type="scientific">Rattus norvegicus</name>
    <name type="common">Rat</name>
    <dbReference type="NCBI Taxonomy" id="10116"/>
    <lineage>
        <taxon>Eukaryota</taxon>
        <taxon>Metazoa</taxon>
        <taxon>Chordata</taxon>
        <taxon>Craniata</taxon>
        <taxon>Vertebrata</taxon>
        <taxon>Euteleostomi</taxon>
        <taxon>Mammalia</taxon>
        <taxon>Eutheria</taxon>
        <taxon>Euarchontoglires</taxon>
        <taxon>Glires</taxon>
        <taxon>Rodentia</taxon>
        <taxon>Myomorpha</taxon>
        <taxon>Muroidea</taxon>
        <taxon>Muridae</taxon>
        <taxon>Murinae</taxon>
        <taxon>Rattus</taxon>
    </lineage>
</organism>
<evidence type="ECO:0000250" key="1">
    <source>
        <dbReference type="UniProtKB" id="O02777"/>
    </source>
</evidence>
<evidence type="ECO:0000250" key="2">
    <source>
        <dbReference type="UniProtKB" id="P21554"/>
    </source>
</evidence>
<evidence type="ECO:0000250" key="3">
    <source>
        <dbReference type="UniProtKB" id="P47746"/>
    </source>
</evidence>
<evidence type="ECO:0000255" key="4"/>
<evidence type="ECO:0000255" key="5">
    <source>
        <dbReference type="PROSITE-ProRule" id="PRU00521"/>
    </source>
</evidence>
<evidence type="ECO:0000269" key="6">
    <source>
    </source>
</evidence>
<evidence type="ECO:0000269" key="7">
    <source>
    </source>
</evidence>
<evidence type="ECO:0000269" key="8">
    <source>
    </source>
</evidence>
<evidence type="ECO:0000269" key="9">
    <source>
    </source>
</evidence>
<evidence type="ECO:0000269" key="10">
    <source>
    </source>
</evidence>
<evidence type="ECO:0000269" key="11">
    <source>
    </source>
</evidence>
<evidence type="ECO:0000269" key="12">
    <source>
    </source>
</evidence>
<evidence type="ECO:0000269" key="13">
    <source>
    </source>
</evidence>
<evidence type="ECO:0000269" key="14">
    <source>
    </source>
</evidence>
<evidence type="ECO:0000303" key="15">
    <source>
    </source>
</evidence>
<gene>
    <name type="primary">Cnr1</name>
    <name evidence="15" type="synonym">Skr6</name>
</gene>
<feature type="chain" id="PRO_0000069318" description="Cannabinoid receptor 1">
    <location>
        <begin position="1"/>
        <end position="473"/>
    </location>
</feature>
<feature type="topological domain" description="Extracellular" evidence="2">
    <location>
        <begin position="1"/>
        <end position="117"/>
    </location>
</feature>
<feature type="transmembrane region" description="Helical; Name=1" evidence="2">
    <location>
        <begin position="118"/>
        <end position="143"/>
    </location>
</feature>
<feature type="topological domain" description="Cytoplasmic" evidence="2">
    <location>
        <begin position="144"/>
        <end position="155"/>
    </location>
</feature>
<feature type="transmembrane region" description="Helical; Name=2" evidence="2">
    <location>
        <begin position="156"/>
        <end position="176"/>
    </location>
</feature>
<feature type="topological domain" description="Extracellular" evidence="2">
    <location>
        <begin position="177"/>
        <end position="188"/>
    </location>
</feature>
<feature type="transmembrane region" description="Helical; Name=3" evidence="2">
    <location>
        <begin position="189"/>
        <end position="213"/>
    </location>
</feature>
<feature type="topological domain" description="Cytoplasmic" evidence="2">
    <location>
        <begin position="214"/>
        <end position="233"/>
    </location>
</feature>
<feature type="transmembrane region" description="Helical; Name=4" evidence="2">
    <location>
        <begin position="234"/>
        <end position="256"/>
    </location>
</feature>
<feature type="topological domain" description="Extracellular" evidence="2">
    <location>
        <begin position="257"/>
        <end position="274"/>
    </location>
</feature>
<feature type="transmembrane region" description="Helical; Name=5" evidence="2">
    <location>
        <begin position="275"/>
        <end position="300"/>
    </location>
</feature>
<feature type="topological domain" description="Cytoplasmic" evidence="2">
    <location>
        <begin position="301"/>
        <end position="345"/>
    </location>
</feature>
<feature type="transmembrane region" description="Helical; Name=6" evidence="2">
    <location>
        <begin position="346"/>
        <end position="366"/>
    </location>
</feature>
<feature type="topological domain" description="Extracellular" evidence="2">
    <location>
        <begin position="367"/>
        <end position="378"/>
    </location>
</feature>
<feature type="transmembrane region" description="Helical; Name=7" evidence="2">
    <location>
        <begin position="379"/>
        <end position="400"/>
    </location>
</feature>
<feature type="topological domain" description="Cytoplasmic" evidence="2">
    <location>
        <begin position="401"/>
        <end position="473"/>
    </location>
</feature>
<feature type="region of interest" description="Required for mitochondrial localization" evidence="3">
    <location>
        <begin position="2"/>
        <end position="23"/>
    </location>
</feature>
<feature type="modified residue" description="Phosphoserine" evidence="3">
    <location>
        <position position="426"/>
    </location>
</feature>
<feature type="modified residue" description="Phosphoserine" evidence="3">
    <location>
        <position position="430"/>
    </location>
</feature>
<feature type="lipid moiety-binding region" description="S-palmitoyl cysteine" evidence="12">
    <location>
        <position position="416"/>
    </location>
</feature>
<feature type="glycosylation site" description="N-linked (GlcNAc...) asparagine" evidence="4">
    <location>
        <position position="78"/>
    </location>
</feature>
<feature type="glycosylation site" description="N-linked (GlcNAc...) asparagine" evidence="4">
    <location>
        <position position="84"/>
    </location>
</feature>
<accession>P20272</accession>
<dbReference type="EMBL" id="X55812">
    <property type="protein sequence ID" value="CAA39332.1"/>
    <property type="molecule type" value="mRNA"/>
</dbReference>
<dbReference type="EMBL" id="U40395">
    <property type="protein sequence ID" value="AAA99067.1"/>
    <property type="molecule type" value="mRNA"/>
</dbReference>
<dbReference type="PIR" id="A33117">
    <property type="entry name" value="A33117"/>
</dbReference>
<dbReference type="RefSeq" id="NP_001416243.1">
    <property type="nucleotide sequence ID" value="NM_001429314.1"/>
</dbReference>
<dbReference type="RefSeq" id="NP_001416244.1">
    <property type="nucleotide sequence ID" value="NM_001429315.1"/>
</dbReference>
<dbReference type="RefSeq" id="NP_001416245.1">
    <property type="nucleotide sequence ID" value="NM_001429316.1"/>
</dbReference>
<dbReference type="RefSeq" id="NP_001416246.1">
    <property type="nucleotide sequence ID" value="NM_001429317.1"/>
</dbReference>
<dbReference type="RefSeq" id="NP_036916.1">
    <property type="nucleotide sequence ID" value="NM_012784.6"/>
</dbReference>
<dbReference type="RefSeq" id="XP_006238046.1">
    <property type="nucleotide sequence ID" value="XM_006237984.3"/>
</dbReference>
<dbReference type="RefSeq" id="XP_017448640.1">
    <property type="nucleotide sequence ID" value="XM_017593151.1"/>
</dbReference>
<dbReference type="RefSeq" id="XP_063143237.1">
    <property type="nucleotide sequence ID" value="XM_063287167.1"/>
</dbReference>
<dbReference type="RefSeq" id="XP_063143238.1">
    <property type="nucleotide sequence ID" value="XM_063287168.1"/>
</dbReference>
<dbReference type="RefSeq" id="XP_063143239.1">
    <property type="nucleotide sequence ID" value="XM_063287169.1"/>
</dbReference>
<dbReference type="SMR" id="P20272"/>
<dbReference type="BioGRID" id="247288">
    <property type="interactions" value="3"/>
</dbReference>
<dbReference type="CORUM" id="P20272"/>
<dbReference type="FunCoup" id="P20272">
    <property type="interactions" value="2521"/>
</dbReference>
<dbReference type="IntAct" id="P20272">
    <property type="interactions" value="3"/>
</dbReference>
<dbReference type="MINT" id="P20272"/>
<dbReference type="STRING" id="10116.ENSRNOP00000010850"/>
<dbReference type="BindingDB" id="P20272"/>
<dbReference type="ChEMBL" id="CHEMBL3571"/>
<dbReference type="DrugCentral" id="P20272"/>
<dbReference type="GuidetoPHARMACOLOGY" id="56"/>
<dbReference type="GlyCosmos" id="P20272">
    <property type="glycosylation" value="2 sites, No reported glycans"/>
</dbReference>
<dbReference type="GlyGen" id="P20272">
    <property type="glycosylation" value="2 sites"/>
</dbReference>
<dbReference type="iPTMnet" id="P20272"/>
<dbReference type="PhosphoSitePlus" id="P20272"/>
<dbReference type="SwissPalm" id="P20272"/>
<dbReference type="PaxDb" id="10116-ENSRNOP00000010850"/>
<dbReference type="Ensembl" id="ENSRNOT00000010850.3">
    <property type="protein sequence ID" value="ENSRNOP00000010850.1"/>
    <property type="gene ID" value="ENSRNOG00000008223.3"/>
</dbReference>
<dbReference type="Ensembl" id="ENSRNOT00000099728.1">
    <property type="protein sequence ID" value="ENSRNOP00000081243.1"/>
    <property type="gene ID" value="ENSRNOG00000008223.3"/>
</dbReference>
<dbReference type="Ensembl" id="ENSRNOT00000101534.1">
    <property type="protein sequence ID" value="ENSRNOP00000085179.1"/>
    <property type="gene ID" value="ENSRNOG00000008223.3"/>
</dbReference>
<dbReference type="Ensembl" id="ENSRNOT00000117169.1">
    <property type="protein sequence ID" value="ENSRNOP00000079932.1"/>
    <property type="gene ID" value="ENSRNOG00000008223.3"/>
</dbReference>
<dbReference type="GeneID" id="25248"/>
<dbReference type="KEGG" id="rno:25248"/>
<dbReference type="UCSC" id="RGD:2369">
    <property type="organism name" value="rat"/>
</dbReference>
<dbReference type="AGR" id="RGD:2369"/>
<dbReference type="CTD" id="1268"/>
<dbReference type="RGD" id="2369">
    <property type="gene designation" value="Cnr1"/>
</dbReference>
<dbReference type="eggNOG" id="KOG3656">
    <property type="taxonomic scope" value="Eukaryota"/>
</dbReference>
<dbReference type="GeneTree" id="ENSGT01120000271819"/>
<dbReference type="HOGENOM" id="CLU_009579_7_0_1"/>
<dbReference type="InParanoid" id="P20272"/>
<dbReference type="OMA" id="HKHANSA"/>
<dbReference type="OrthoDB" id="5966748at2759"/>
<dbReference type="PhylomeDB" id="P20272"/>
<dbReference type="TreeFam" id="TF330052"/>
<dbReference type="Reactome" id="R-RNO-373076">
    <property type="pathway name" value="Class A/1 (Rhodopsin-like receptors)"/>
</dbReference>
<dbReference type="Reactome" id="R-RNO-418594">
    <property type="pathway name" value="G alpha (i) signalling events"/>
</dbReference>
<dbReference type="PRO" id="PR:P20272"/>
<dbReference type="Proteomes" id="UP000002494">
    <property type="component" value="Chromosome 5"/>
</dbReference>
<dbReference type="Bgee" id="ENSRNOG00000008223">
    <property type="expression patterns" value="Expressed in Ammon's horn and 11 other cell types or tissues"/>
</dbReference>
<dbReference type="GO" id="GO:0030424">
    <property type="term" value="C:axon"/>
    <property type="evidence" value="ECO:0000266"/>
    <property type="project" value="RGD"/>
</dbReference>
<dbReference type="GO" id="GO:0005737">
    <property type="term" value="C:cytoplasm"/>
    <property type="evidence" value="ECO:0000318"/>
    <property type="project" value="GO_Central"/>
</dbReference>
<dbReference type="GO" id="GO:0098982">
    <property type="term" value="C:GABA-ergic synapse"/>
    <property type="evidence" value="ECO:0000266"/>
    <property type="project" value="RGD"/>
</dbReference>
<dbReference type="GO" id="GO:0098978">
    <property type="term" value="C:glutamatergic synapse"/>
    <property type="evidence" value="ECO:0000266"/>
    <property type="project" value="RGD"/>
</dbReference>
<dbReference type="GO" id="GO:0030426">
    <property type="term" value="C:growth cone"/>
    <property type="evidence" value="ECO:0000266"/>
    <property type="project" value="RGD"/>
</dbReference>
<dbReference type="GO" id="GO:0045121">
    <property type="term" value="C:membrane raft"/>
    <property type="evidence" value="ECO:0000314"/>
    <property type="project" value="CACAO"/>
</dbReference>
<dbReference type="GO" id="GO:0005741">
    <property type="term" value="C:mitochondrial outer membrane"/>
    <property type="evidence" value="ECO:0007669"/>
    <property type="project" value="UniProtKB-SubCell"/>
</dbReference>
<dbReference type="GO" id="GO:0005739">
    <property type="term" value="C:mitochondrion"/>
    <property type="evidence" value="ECO:0000266"/>
    <property type="project" value="RGD"/>
</dbReference>
<dbReference type="GO" id="GO:0005886">
    <property type="term" value="C:plasma membrane"/>
    <property type="evidence" value="ECO:0000314"/>
    <property type="project" value="UniProtKB"/>
</dbReference>
<dbReference type="GO" id="GO:0042734">
    <property type="term" value="C:presynaptic membrane"/>
    <property type="evidence" value="ECO:0000266"/>
    <property type="project" value="RGD"/>
</dbReference>
<dbReference type="GO" id="GO:0004949">
    <property type="term" value="F:cannabinoid receptor activity"/>
    <property type="evidence" value="ECO:0000315"/>
    <property type="project" value="RGD"/>
</dbReference>
<dbReference type="GO" id="GO:0004930">
    <property type="term" value="F:G protein-coupled receptor activity"/>
    <property type="evidence" value="ECO:0000318"/>
    <property type="project" value="GO_Central"/>
</dbReference>
<dbReference type="GO" id="GO:0042802">
    <property type="term" value="F:identical protein binding"/>
    <property type="evidence" value="ECO:0000266"/>
    <property type="project" value="RGD"/>
</dbReference>
<dbReference type="GO" id="GO:0007189">
    <property type="term" value="P:adenylate cyclase-activating G protein-coupled receptor signaling pathway"/>
    <property type="evidence" value="ECO:0000318"/>
    <property type="project" value="GO_Central"/>
</dbReference>
<dbReference type="GO" id="GO:0007188">
    <property type="term" value="P:adenylate cyclase-modulating G protein-coupled receptor signaling pathway"/>
    <property type="evidence" value="ECO:0000250"/>
    <property type="project" value="UniProtKB"/>
</dbReference>
<dbReference type="GO" id="GO:0007413">
    <property type="term" value="P:axonal fasciculation"/>
    <property type="evidence" value="ECO:0000266"/>
    <property type="project" value="RGD"/>
</dbReference>
<dbReference type="GO" id="GO:0038171">
    <property type="term" value="P:cannabinoid signaling pathway"/>
    <property type="evidence" value="ECO:0000314"/>
    <property type="project" value="UniProtKB"/>
</dbReference>
<dbReference type="GO" id="GO:0007186">
    <property type="term" value="P:G protein-coupled receptor signaling pathway"/>
    <property type="evidence" value="ECO:0000315"/>
    <property type="project" value="RGD"/>
</dbReference>
<dbReference type="GO" id="GO:0042593">
    <property type="term" value="P:glucose homeostasis"/>
    <property type="evidence" value="ECO:0000266"/>
    <property type="project" value="RGD"/>
</dbReference>
<dbReference type="GO" id="GO:0007611">
    <property type="term" value="P:learning or memory"/>
    <property type="evidence" value="ECO:0000315"/>
    <property type="project" value="RGD"/>
</dbReference>
<dbReference type="GO" id="GO:0060135">
    <property type="term" value="P:maternal process involved in female pregnancy"/>
    <property type="evidence" value="ECO:0000270"/>
    <property type="project" value="RGD"/>
</dbReference>
<dbReference type="GO" id="GO:0007613">
    <property type="term" value="P:memory"/>
    <property type="evidence" value="ECO:0000314"/>
    <property type="project" value="RGD"/>
</dbReference>
<dbReference type="GO" id="GO:0045759">
    <property type="term" value="P:negative regulation of action potential"/>
    <property type="evidence" value="ECO:0000315"/>
    <property type="project" value="RGD"/>
</dbReference>
<dbReference type="GO" id="GO:0045776">
    <property type="term" value="P:negative regulation of blood pressure"/>
    <property type="evidence" value="ECO:0000315"/>
    <property type="project" value="RGD"/>
</dbReference>
<dbReference type="GO" id="GO:0033602">
    <property type="term" value="P:negative regulation of dopamine secretion"/>
    <property type="evidence" value="ECO:0000315"/>
    <property type="project" value="RGD"/>
</dbReference>
<dbReference type="GO" id="GO:0031999">
    <property type="term" value="P:negative regulation of fatty acid beta-oxidation"/>
    <property type="evidence" value="ECO:0000315"/>
    <property type="project" value="RGD"/>
</dbReference>
<dbReference type="GO" id="GO:0033004">
    <property type="term" value="P:negative regulation of mast cell activation"/>
    <property type="evidence" value="ECO:0000314"/>
    <property type="project" value="RGD"/>
</dbReference>
<dbReference type="GO" id="GO:0043271">
    <property type="term" value="P:negative regulation of monoatomic ion transport"/>
    <property type="evidence" value="ECO:0000314"/>
    <property type="project" value="RGD"/>
</dbReference>
<dbReference type="GO" id="GO:0014063">
    <property type="term" value="P:negative regulation of serotonin secretion"/>
    <property type="evidence" value="ECO:0000315"/>
    <property type="project" value="CACAO"/>
</dbReference>
<dbReference type="GO" id="GO:0002866">
    <property type="term" value="P:positive regulation of acute inflammatory response to antigenic stimulus"/>
    <property type="evidence" value="ECO:0000315"/>
    <property type="project" value="RGD"/>
</dbReference>
<dbReference type="GO" id="GO:0043065">
    <property type="term" value="P:positive regulation of apoptotic process"/>
    <property type="evidence" value="ECO:0000315"/>
    <property type="project" value="RGD"/>
</dbReference>
<dbReference type="GO" id="GO:0045777">
    <property type="term" value="P:positive regulation of blood pressure"/>
    <property type="evidence" value="ECO:0000315"/>
    <property type="project" value="RGD"/>
</dbReference>
<dbReference type="GO" id="GO:0031622">
    <property type="term" value="P:positive regulation of fever generation"/>
    <property type="evidence" value="ECO:0000315"/>
    <property type="project" value="RGD"/>
</dbReference>
<dbReference type="GO" id="GO:0010976">
    <property type="term" value="P:positive regulation of neuron projection development"/>
    <property type="evidence" value="ECO:0000314"/>
    <property type="project" value="RGD"/>
</dbReference>
<dbReference type="GO" id="GO:0060259">
    <property type="term" value="P:regulation of feeding behavior"/>
    <property type="evidence" value="ECO:0000315"/>
    <property type="project" value="RGD"/>
</dbReference>
<dbReference type="GO" id="GO:0050796">
    <property type="term" value="P:regulation of insulin secretion"/>
    <property type="evidence" value="ECO:0000315"/>
    <property type="project" value="RGD"/>
</dbReference>
<dbReference type="GO" id="GO:0019216">
    <property type="term" value="P:regulation of lipid metabolic process"/>
    <property type="evidence" value="ECO:0000315"/>
    <property type="project" value="RGD"/>
</dbReference>
<dbReference type="GO" id="GO:1900452">
    <property type="term" value="P:regulation of long-term synaptic depression"/>
    <property type="evidence" value="ECO:0000315"/>
    <property type="project" value="RGD"/>
</dbReference>
<dbReference type="GO" id="GO:0019222">
    <property type="term" value="P:regulation of metabolic process"/>
    <property type="evidence" value="ECO:0000318"/>
    <property type="project" value="GO_Central"/>
</dbReference>
<dbReference type="GO" id="GO:0060405">
    <property type="term" value="P:regulation of penile erection"/>
    <property type="evidence" value="ECO:0000315"/>
    <property type="project" value="RGD"/>
</dbReference>
<dbReference type="GO" id="GO:0099509">
    <property type="term" value="P:regulation of presynaptic cytosolic calcium ion concentration"/>
    <property type="evidence" value="ECO:0000266"/>
    <property type="project" value="RGD"/>
</dbReference>
<dbReference type="GO" id="GO:0032228">
    <property type="term" value="P:regulation of synaptic transmission, GABAergic"/>
    <property type="evidence" value="ECO:0000315"/>
    <property type="project" value="RGD"/>
</dbReference>
<dbReference type="GO" id="GO:0051966">
    <property type="term" value="P:regulation of synaptic transmission, glutamatergic"/>
    <property type="evidence" value="ECO:0000315"/>
    <property type="project" value="RGD"/>
</dbReference>
<dbReference type="GO" id="GO:0042220">
    <property type="term" value="P:response to cocaine"/>
    <property type="evidence" value="ECO:0000315"/>
    <property type="project" value="RGD"/>
</dbReference>
<dbReference type="GO" id="GO:0045471">
    <property type="term" value="P:response to ethanol"/>
    <property type="evidence" value="ECO:0000315"/>
    <property type="project" value="RGD"/>
</dbReference>
<dbReference type="GO" id="GO:0032496">
    <property type="term" value="P:response to lipopolysaccharide"/>
    <property type="evidence" value="ECO:0000315"/>
    <property type="project" value="RGD"/>
</dbReference>
<dbReference type="GO" id="GO:0035094">
    <property type="term" value="P:response to nicotine"/>
    <property type="evidence" value="ECO:0000315"/>
    <property type="project" value="RGD"/>
</dbReference>
<dbReference type="GO" id="GO:0007584">
    <property type="term" value="P:response to nutrient"/>
    <property type="evidence" value="ECO:0000270"/>
    <property type="project" value="RGD"/>
</dbReference>
<dbReference type="GO" id="GO:0098921">
    <property type="term" value="P:retrograde trans-synaptic signaling by endocannabinoid"/>
    <property type="evidence" value="ECO:0000266"/>
    <property type="project" value="RGD"/>
</dbReference>
<dbReference type="GO" id="GO:0007283">
    <property type="term" value="P:spermatogenesis"/>
    <property type="evidence" value="ECO:0000270"/>
    <property type="project" value="RGD"/>
</dbReference>
<dbReference type="CDD" id="cd15340">
    <property type="entry name" value="7tmA_CB1"/>
    <property type="match status" value="1"/>
</dbReference>
<dbReference type="FunFam" id="1.20.1070.10:FF:000072">
    <property type="entry name" value="Cannabinoid receptor 1"/>
    <property type="match status" value="1"/>
</dbReference>
<dbReference type="Gene3D" id="1.20.1070.10">
    <property type="entry name" value="Rhodopsin 7-helix transmembrane proteins"/>
    <property type="match status" value="1"/>
</dbReference>
<dbReference type="InterPro" id="IPR000810">
    <property type="entry name" value="Canbinoid_rcpt_1"/>
</dbReference>
<dbReference type="InterPro" id="IPR002230">
    <property type="entry name" value="Cnbnoid_rcpt"/>
</dbReference>
<dbReference type="InterPro" id="IPR000276">
    <property type="entry name" value="GPCR_Rhodpsn"/>
</dbReference>
<dbReference type="InterPro" id="IPR017452">
    <property type="entry name" value="GPCR_Rhodpsn_7TM"/>
</dbReference>
<dbReference type="PANTHER" id="PTHR22750">
    <property type="entry name" value="G-PROTEIN COUPLED RECEPTOR"/>
    <property type="match status" value="1"/>
</dbReference>
<dbReference type="Pfam" id="PF00001">
    <property type="entry name" value="7tm_1"/>
    <property type="match status" value="1"/>
</dbReference>
<dbReference type="PIRSF" id="PIRSF037995">
    <property type="entry name" value="Cnoid_rcpt_1"/>
    <property type="match status" value="1"/>
</dbReference>
<dbReference type="PRINTS" id="PR00522">
    <property type="entry name" value="CANABINOID1R"/>
</dbReference>
<dbReference type="PRINTS" id="PR00362">
    <property type="entry name" value="CANNABINOIDR"/>
</dbReference>
<dbReference type="PRINTS" id="PR00237">
    <property type="entry name" value="GPCRRHODOPSN"/>
</dbReference>
<dbReference type="SMART" id="SM01381">
    <property type="entry name" value="7TM_GPCR_Srsx"/>
    <property type="match status" value="1"/>
</dbReference>
<dbReference type="SUPFAM" id="SSF81321">
    <property type="entry name" value="Family A G protein-coupled receptor-like"/>
    <property type="match status" value="1"/>
</dbReference>
<dbReference type="PROSITE" id="PS00237">
    <property type="entry name" value="G_PROTEIN_RECEP_F1_1"/>
    <property type="match status" value="1"/>
</dbReference>
<dbReference type="PROSITE" id="PS50262">
    <property type="entry name" value="G_PROTEIN_RECEP_F1_2"/>
    <property type="match status" value="1"/>
</dbReference>
<reference key="1">
    <citation type="journal article" date="1990" name="Nature">
        <title>Structure of a cannabinoid receptor and functional expression of the cloned cDNA.</title>
        <authorList>
            <person name="Matsuda L.A."/>
            <person name="Lolait S.J."/>
            <person name="Brownstein M.J."/>
            <person name="Young A.C."/>
            <person name="Bonner T.I."/>
        </authorList>
    </citation>
    <scope>NUCLEOTIDE SEQUENCE [MRNA]</scope>
    <scope>FUNCTION</scope>
    <scope>TISSUE SPECIFICITY</scope>
    <source>
        <tissue>Brain cortex</tissue>
    </source>
</reference>
<reference key="2">
    <citation type="journal article" date="1996" name="Neurosci. Lett.">
        <title>Determination of the cannabinoid receptors in mouse x rat hybridoma NG108-15 cells and rat GH4C1 cells.</title>
        <authorList>
            <person name="Ho B.Y."/>
            <person name="Zhao J."/>
        </authorList>
    </citation>
    <scope>NUCLEOTIDE SEQUENCE [MRNA]</scope>
</reference>
<reference key="3">
    <citation type="journal article" date="1995" name="J. Biol. Chem.">
        <title>An amino-terminal variant of the central cannabinoid receptor resulting from alternative splicing.</title>
        <authorList>
            <person name="Shire D."/>
            <person name="Carillon C."/>
            <person name="Kaghad M."/>
            <person name="Calandra B."/>
            <person name="Rinaldi-Carmona M."/>
            <person name="Le Fur G."/>
            <person name="Caput D."/>
            <person name="Ferrara P."/>
        </authorList>
    </citation>
    <scope>NUCLEOTIDE SEQUENCE [MRNA] OF 1-107</scope>
</reference>
<reference key="4">
    <citation type="journal article" date="1999" name="Am. J. Physiol.">
        <title>Cannabinoid CB1 receptor of cat cerebral arterial muscle functions to inhibit L-type Ca2+ channel current.</title>
        <authorList>
            <person name="Gebremedhin D."/>
            <person name="Lange A.R."/>
            <person name="Campbell W.B."/>
            <person name="Hillard C.J."/>
            <person name="Harder D.R."/>
        </authorList>
    </citation>
    <scope>TISSUE SPECIFICITY</scope>
</reference>
<reference key="5">
    <citation type="journal article" date="2000" name="Neuroscience">
        <title>Cannabinoid receptor messenger RNA levels decrease in a subset of neurons of the lateral striatum, cortex and hippocampus of transgenic Huntington's disease mice.</title>
        <authorList>
            <person name="Denovan-Wright E.M."/>
            <person name="Robertson H.A."/>
        </authorList>
    </citation>
    <scope>TISSUE SPECIFICITY</scope>
</reference>
<reference key="6">
    <citation type="journal article" date="2005" name="J. Neurosci.">
        <title>Endocannabinoid signaling in rat somatosensory cortex: laminar differences and involvement of specific interneuron types.</title>
        <authorList>
            <person name="Bodor A.L."/>
            <person name="Katona I."/>
            <person name="Nyiri G."/>
            <person name="Mackie K."/>
            <person name="Ledent C."/>
            <person name="Hajos N."/>
            <person name="Freund T.F."/>
        </authorList>
    </citation>
    <scope>SUBCELLULAR LOCATION</scope>
    <scope>TOPOLOGY</scope>
    <scope>TISSUE SPECIFICITY</scope>
</reference>
<reference key="7">
    <citation type="journal article" date="2007" name="Mol. Pharmacol.">
        <title>CB1 cannabinoid receptor activity is modulated by the cannabinoid receptor interacting protein CRIP 1a.</title>
        <authorList>
            <person name="Niehaus J.L."/>
            <person name="Liu Y."/>
            <person name="Wallis K.T."/>
            <person name="Egertova M."/>
            <person name="Bhartur S.G."/>
            <person name="Mukhopadhyay S."/>
            <person name="Shi S."/>
            <person name="He H."/>
            <person name="Selley D.E."/>
            <person name="Howlett A.C."/>
            <person name="Elphick M.R."/>
            <person name="Lewis D.L."/>
        </authorList>
    </citation>
    <scope>INTERACTION WITH CNRIP1</scope>
    <source>
        <tissue>Brain</tissue>
    </source>
</reference>
<reference key="8">
    <citation type="journal article" date="2007" name="Proc. Natl. Acad. Sci. U.S.A.">
        <title>Hemopressin is an inverse agonist of CB1 cannabinoid receptors.</title>
        <authorList>
            <person name="Heimann A.S."/>
            <person name="Gomes I."/>
            <person name="Dale C.S."/>
            <person name="Pagano R.L."/>
            <person name="Gupta A."/>
            <person name="de Souza L.L."/>
            <person name="Luchessi A.D."/>
            <person name="Castro L.M."/>
            <person name="Giorgi R."/>
            <person name="Rioli V."/>
            <person name="Ferro E.S."/>
            <person name="Devi L.A."/>
        </authorList>
    </citation>
    <scope>ACTIVITY REGULATION</scope>
</reference>
<reference key="9">
    <citation type="journal article" date="2012" name="Br. J. Pharmacol.">
        <title>Effects of palmitoylation of Cys(415) in helix 8 of the CB(1) cannabinoid receptor on membrane localization and signalling.</title>
        <authorList>
            <person name="Oddi S."/>
            <person name="Dainese E."/>
            <person name="Sandiford S."/>
            <person name="Fezza F."/>
            <person name="Lanuti M."/>
            <person name="Chiurchiu V."/>
            <person name="Totaro A."/>
            <person name="Catanzaro G."/>
            <person name="Barcaroli D."/>
            <person name="De Laurenzi V."/>
            <person name="Centonze D."/>
            <person name="Mukhopadhyay S."/>
            <person name="Selent J."/>
            <person name="Howlett A.C."/>
            <person name="Maccarrone M."/>
        </authorList>
    </citation>
    <scope>INTERACTION WITH GNAI3 AND GNAO1</scope>
    <scope>PALMITOYLATION AT CYS-416</scope>
</reference>
<reference key="10">
    <citation type="journal article" date="2013" name="Nat. Med.">
        <title>Activation of the Nlrp3 inflammasome in infiltrating macrophages by endocannabinoids mediates beta cell loss in type 2 diabetes.</title>
        <authorList>
            <person name="Jourdan T."/>
            <person name="Godlewski G."/>
            <person name="Cinar R."/>
            <person name="Bertola A."/>
            <person name="Szanda G."/>
            <person name="Liu J."/>
            <person name="Tam J."/>
            <person name="Han T."/>
            <person name="Mukhopadhyay B."/>
            <person name="Skarulis M.C."/>
            <person name="Ju C."/>
            <person name="Aouadi M."/>
            <person name="Czech M.P."/>
            <person name="Kunos G."/>
        </authorList>
    </citation>
    <scope>FUNCTION</scope>
    <scope>TISSUE SPECIFICITY</scope>
</reference>
<reference key="11">
    <citation type="journal article" date="2015" name="PLoS ONE">
        <title>Pharmacological blockade of cannabinoid CB1 receptors in diet-induced obesity regulates mitochondrial dihydrolipoamide dehydrogenase in muscle.</title>
        <authorList>
            <person name="Arrabal S."/>
            <person name="Lucena M.A."/>
            <person name="Canduela M.J."/>
            <person name="Ramos-Uriarte A."/>
            <person name="Rivera P."/>
            <person name="Serrano A."/>
            <person name="Pavon F.J."/>
            <person name="Decara J."/>
            <person name="Vargas A."/>
            <person name="Baixeras E."/>
            <person name="Martin-Rufian M."/>
            <person name="Marquez J."/>
            <person name="Fernandez-Llebrez P."/>
            <person name="De Roos B."/>
            <person name="Grandes P."/>
            <person name="Rodriguez de Fonseca F."/>
            <person name="Suarez J."/>
        </authorList>
    </citation>
    <scope>FUNCTION</scope>
    <scope>TISSUE SPECIFICITY</scope>
    <scope>SUBCELLULAR LOCATION</scope>
</reference>
<sequence>MKSILDGLADTTFRTITTDLLYVGSNDIQYEDIKGDMASKLGYFPQKFPLTSFRGSPFQEKMTAGDNSPLVPAGDTTNITEFYNKSLSSFKENEENIQCGENFMDMECFMILNPSQQLAIAVLSLTLGTFTVLENLLVLCVILHSRSLRCRPSYHFIGSLAVADLLGSVIFVYSFVDFHVFHRKDSPNVFLFKLGGVTASFTASVGSLFLTAIDRYISIHRPLAYKRIVTRPKAVVAFCLMWTIAIVIAVLPLLGWNCKKLQSVCSDIFPLIDETYLMFWIGVTSVLLLFIVYAYMYILWKAHSHAVRMIQRGTQKSIIIHTSEDGKVQVTRPDQARMDIRLAKTLVLILVVLIICWGPLLAIMVYDVFGKMNKLIKTVFAFCSMLCLLNSTVNPIIYALRSKDLRHAFRSMFPSCEGTAQPLDNSMGDSDCLHKHANNTASMHRAAESCIKSTVKIAKVTMSVSTDTSAEAL</sequence>
<name>CNR1_RAT</name>
<proteinExistence type="evidence at protein level"/>
<comment type="function">
    <text evidence="1 3 11 13 14">G-protein coupled receptor for cannabinoids, including endocannabinoids (eCBs), such as N-arachidonoylethanolamide (also called anandamide or AEA) and 2-arachidonoylglycerol (2-AG) (PubMed:2165569). Mediates many cannabinoid-induced effects, acting, among others, on food intake, memory loss, gastrointestinal motility, catalepsy, ambulatory activity, anxiety, chronic pain. Signaling typically involves reduction in cyclic AMP. In the hypothalamus, may have a dual effect on mitochondrial respiration depending upon the agonist dose and possibly upon the cell type. Increases respiration at low doses, while decreases respiration at high doses. At high doses, CNR1 signal transduction involves G-protein alpha-i protein activation and subsequent inhibition of mitochondrial soluble adenylate cyclase, decrease in cyclic AMP concentration, inhibition of protein kinase A (PKA)-dependent phosphorylation of specific subunits of the mitochondrial electron transport system, including NDUFS2. In the hypothalamus, inhibits leptin-induced reactive oxygen species (ROS) formation and mediates cannabinoid-induced increase in SREBF1 and FASN gene expression. In response to cannabinoids, drives the release of orexigenic beta-endorphin, but not that of melanocyte-stimulating hormone alpha/alpha-MSH, from hypothalamic POMC neurons, hence promoting food intake. In the hippocampus, regulates cellular respiration and energy production in response to cannabinoids. Involved in cannabinoid-dependent depolarization-induced suppression of inhibition (DSI), a process in which depolarization of CA1 postsynaptic pyramidal neurons mobilizes eCBs, which retrogradely activate presynaptic CB1 receptors, transiently decreasing GABAergic inhibitory neurotransmission. Also reduces excitatory synaptic transmission (By similarity). In superior cervical ganglions and cerebral vascular smooth muscle cells, inhibits voltage-gated Ca(2+) channels in a constitutive, as well as agonist-dependent manner (By similarity). Induces leptin production in adipocytes and reduces LRP2-mediated leptin clearance in the kidney, hence participating in hyperleptinemia. In adipose tissue, CNR1 signaling leads to increased expression of SREBF1, ACACA and FASN genes. In the liver, activation by endocannabinoids leads to increased de novo lipogenesis and reduced fatty acid catabolism, associated with increased expression of SREBF1/SREBP-1, GCK, ACACA, ACACB and FASN genes. May also affect de novo cholesterol synthesis and HDL-cholesteryl ether uptake (By similarity). Peripherally modulates energy metabolism. In high carbohydrate diet-induced obesity, may decrease the expression of mitochondrial dihydrolipoyl dehydrogenase/DLD in striated muscles, as well as that of selected glucose/ pyruvate metabolic enzymes, hence affecting energy expenditure through mitochondrial metabolism (PubMed:26671069). In response to cannabinoid anandamide, elicits a pro-inflammatory response in macrophages, which involves NLRP3 inflammasome activation and IL1B and IL18 secretion. In macrophages infiltrating pancreatic islets, this process may participate in the progression of type-2 diabetes and associated loss of pancreatic beta-cells (PubMed:23955712).</text>
</comment>
<comment type="activity regulation">
    <text evidence="10">Hemopressin, a peptide derived from hemoglobin subunit alpha (HBA1 and/or HBA2), acts as an antagonist peptide: hemopressin-binding efficiently blocks cannabinoid receptor CNR1 and subsequent signaling.</text>
</comment>
<comment type="subunit">
    <text evidence="9 12">Interacts (via C-terminus) with CNRIP1 (PubMed:17895407). Associates with G protein alpha subunits, including G(i) alpha-1/GNAI1, G(i) alpha-3/GNAI3 and G(o)-alpha/GNAO1; palmitoylation is important for interaction with GNAI3 and GNAO1 (PubMed:21895628).</text>
</comment>
<comment type="interaction">
    <interactant intactId="EBI-2909800">
        <id>P20272</id>
    </interactant>
    <interactant intactId="EBI-2902822">
        <id>P30543</id>
        <label>Adora2a</label>
    </interactant>
    <organismsDiffer>false</organismsDiffer>
    <experiments>3</experiments>
</comment>
<comment type="subcellular location">
    <subcellularLocation>
        <location evidence="3">Cell membrane</location>
        <topology evidence="2">Multi-pass membrane protein</topology>
    </subcellularLocation>
    <subcellularLocation>
        <location evidence="3">Mitochondrion outer membrane</location>
    </subcellularLocation>
    <subcellularLocation>
        <location evidence="8">Cell projection</location>
        <location evidence="8">Axon</location>
    </subcellularLocation>
    <subcellularLocation>
        <location evidence="8">Presynapse</location>
    </subcellularLocation>
    <text evidence="3 8">Unexpectedly, in the mitochondria, the C-terminus is located in the mitochondrial intermembrane space, a compartment topologically considered as extracellular. In canonical seven-transmembrane G-protein coupled receptors, the C-terminus is cytosolic (By similarity). In interneurons, found on the membrane of cytoplasmic compartments, some of which could be elements of the endosome-lysosome system and multivesicular bodies (PubMed:16033894). Found on presynaptic axon terminals in some GABAergic neurons in the somatosensory cortex (PubMed:16033894).</text>
</comment>
<comment type="tissue specificity">
    <text evidence="6 7 8 11 13 14">Expressed in the brain, in the striatum, medial septum, descending arm of the band of Broca, the amygdaloid nucleus, the hippocampus and cortex (at protein level). High levels in the lateral striatum. In rostral brain regions, high expression levels in the dorsal lateral striatum, while in the caudal brain regions, high levels are observed in the ventral lateral striatum (PubMed:10362691, PubMed:10891614, PubMed:16033894, PubMed:2165569). Expressed in monocytes/macrophages (at protein level) (PubMed:23955712). Expressed in striated muscles and in vascular smooth muscles cells (at protein level) (PubMed:10362691, PubMed:26671069).</text>
</comment>
<comment type="PTM">
    <text evidence="12">Palmitoylation at Cys-416 is important for recruitment at both plasma membrane and lipid rafts and association with G protein alpha subunits.</text>
</comment>
<comment type="miscellaneous">
    <text evidence="3">High-fat diet also increases the hepatic levels of CNR1 ligand anandamide, but not that of 2-arachidonoylglycerol.</text>
</comment>
<comment type="similarity">
    <text evidence="5">Belongs to the G-protein coupled receptor 1 family.</text>
</comment>
<protein>
    <recommendedName>
        <fullName>Cannabinoid receptor 1</fullName>
        <shortName>CB-R</shortName>
        <shortName>CB1</shortName>
    </recommendedName>
    <alternativeName>
        <fullName>Brain-type cannabinoid receptor</fullName>
    </alternativeName>
</protein>
<keyword id="KW-1003">Cell membrane</keyword>
<keyword id="KW-0966">Cell projection</keyword>
<keyword id="KW-0297">G-protein coupled receptor</keyword>
<keyword id="KW-0325">Glycoprotein</keyword>
<keyword id="KW-0449">Lipoprotein</keyword>
<keyword id="KW-0472">Membrane</keyword>
<keyword id="KW-0496">Mitochondrion</keyword>
<keyword id="KW-1000">Mitochondrion outer membrane</keyword>
<keyword id="KW-0564">Palmitate</keyword>
<keyword id="KW-0597">Phosphoprotein</keyword>
<keyword id="KW-0675">Receptor</keyword>
<keyword id="KW-1185">Reference proteome</keyword>
<keyword id="KW-0770">Synapse</keyword>
<keyword id="KW-0807">Transducer</keyword>
<keyword id="KW-0812">Transmembrane</keyword>
<keyword id="KW-1133">Transmembrane helix</keyword>